<proteinExistence type="inferred from homology"/>
<dbReference type="EC" id="2.3.1.-"/>
<dbReference type="EMBL" id="BA000004">
    <property type="protein sequence ID" value="BAB06299.1"/>
    <property type="molecule type" value="Genomic_DNA"/>
</dbReference>
<dbReference type="PIR" id="D83972">
    <property type="entry name" value="D83972"/>
</dbReference>
<dbReference type="RefSeq" id="WP_010898731.1">
    <property type="nucleotide sequence ID" value="NC_002570.2"/>
</dbReference>
<dbReference type="SMR" id="Q9K9R5"/>
<dbReference type="STRING" id="272558.gene:10728478"/>
<dbReference type="KEGG" id="bha:BH2580"/>
<dbReference type="eggNOG" id="COG0454">
    <property type="taxonomic scope" value="Bacteria"/>
</dbReference>
<dbReference type="HOGENOM" id="CLU_136634_0_0_9"/>
<dbReference type="OrthoDB" id="2242710at2"/>
<dbReference type="Proteomes" id="UP000001258">
    <property type="component" value="Chromosome"/>
</dbReference>
<dbReference type="GO" id="GO:0016747">
    <property type="term" value="F:acyltransferase activity, transferring groups other than amino-acyl groups"/>
    <property type="evidence" value="ECO:0007669"/>
    <property type="project" value="UniProtKB-UniRule"/>
</dbReference>
<dbReference type="CDD" id="cd04301">
    <property type="entry name" value="NAT_SF"/>
    <property type="match status" value="1"/>
</dbReference>
<dbReference type="Gene3D" id="3.40.630.30">
    <property type="match status" value="1"/>
</dbReference>
<dbReference type="HAMAP" id="MF_00824">
    <property type="entry name" value="Acetyltransf_YlbP"/>
    <property type="match status" value="1"/>
</dbReference>
<dbReference type="InterPro" id="IPR016181">
    <property type="entry name" value="Acyl_CoA_acyltransferase"/>
</dbReference>
<dbReference type="InterPro" id="IPR000182">
    <property type="entry name" value="GNAT_dom"/>
</dbReference>
<dbReference type="InterPro" id="IPR017274">
    <property type="entry name" value="YlbP"/>
</dbReference>
<dbReference type="NCBIfam" id="NF010241">
    <property type="entry name" value="PRK13688.1"/>
    <property type="match status" value="1"/>
</dbReference>
<dbReference type="Pfam" id="PF00583">
    <property type="entry name" value="Acetyltransf_1"/>
    <property type="match status" value="1"/>
</dbReference>
<dbReference type="PIRSF" id="PIRSF037732">
    <property type="entry name" value="YlbP_prd"/>
    <property type="match status" value="1"/>
</dbReference>
<dbReference type="SUPFAM" id="SSF55729">
    <property type="entry name" value="Acyl-CoA N-acyltransferases (Nat)"/>
    <property type="match status" value="1"/>
</dbReference>
<dbReference type="PROSITE" id="PS51186">
    <property type="entry name" value="GNAT"/>
    <property type="match status" value="1"/>
</dbReference>
<keyword id="KW-0012">Acyltransferase</keyword>
<keyword id="KW-1185">Reference proteome</keyword>
<keyword id="KW-0808">Transferase</keyword>
<sequence>MQQIEVKRLLVNYKTLEEFRNFREFGAAELSMKDDLEANIIENDSESPFYGIYFGGKLVARMSLYRIDGKYDRYFEPPQDYLELWKLEVLEPYRGKGFGRALVDFAKSFNLPVKTNARQRSNEFWTKMGFEPVTYQTDRDRGESPYVWYPEGVKEQLSEDEGSVETLEN</sequence>
<gene>
    <name type="ordered locus">BH2580</name>
</gene>
<reference key="1">
    <citation type="journal article" date="2000" name="Nucleic Acids Res.">
        <title>Complete genome sequence of the alkaliphilic bacterium Bacillus halodurans and genomic sequence comparison with Bacillus subtilis.</title>
        <authorList>
            <person name="Takami H."/>
            <person name="Nakasone K."/>
            <person name="Takaki Y."/>
            <person name="Maeno G."/>
            <person name="Sasaki R."/>
            <person name="Masui N."/>
            <person name="Fuji F."/>
            <person name="Hirama C."/>
            <person name="Nakamura Y."/>
            <person name="Ogasawara N."/>
            <person name="Kuhara S."/>
            <person name="Horikoshi K."/>
        </authorList>
    </citation>
    <scope>NUCLEOTIDE SEQUENCE [LARGE SCALE GENOMIC DNA]</scope>
    <source>
        <strain>ATCC BAA-125 / DSM 18197 / FERM 7344 / JCM 9153 / C-125</strain>
    </source>
</reference>
<accession>Q9K9R5</accession>
<protein>
    <recommendedName>
        <fullName>Uncharacterized N-acetyltransferase BH2580</fullName>
        <ecNumber>2.3.1.-</ecNumber>
    </recommendedName>
</protein>
<name>Y2580_HALH5</name>
<organism>
    <name type="scientific">Halalkalibacterium halodurans (strain ATCC BAA-125 / DSM 18197 / FERM 7344 / JCM 9153 / C-125)</name>
    <name type="common">Bacillus halodurans</name>
    <dbReference type="NCBI Taxonomy" id="272558"/>
    <lineage>
        <taxon>Bacteria</taxon>
        <taxon>Bacillati</taxon>
        <taxon>Bacillota</taxon>
        <taxon>Bacilli</taxon>
        <taxon>Bacillales</taxon>
        <taxon>Bacillaceae</taxon>
        <taxon>Halalkalibacterium (ex Joshi et al. 2022)</taxon>
    </lineage>
</organism>
<feature type="chain" id="PRO_0000232476" description="Uncharacterized N-acetyltransferase BH2580">
    <location>
        <begin position="1"/>
        <end position="169"/>
    </location>
</feature>
<feature type="domain" description="N-acetyltransferase">
    <location>
        <begin position="4"/>
        <end position="160"/>
    </location>
</feature>